<sequence>MRGLRPALSTFLFLLLITGGVYPLLTTALGQWWFPWQANGSLIREGDTVRGSALIGQNFTGNGYFHGRPSATAEMPYNPQASGGSNLAVSNPELDKQIAARVAALRAANPDASTNVPVELVTASASGLDNNITPQAAAWQIPRVAKARNLSVEQLTQLIAKYSQQPLVKYIGQPVVNIVELNLALDRLDE</sequence>
<evidence type="ECO:0000255" key="1">
    <source>
        <dbReference type="HAMAP-Rule" id="MF_00276"/>
    </source>
</evidence>
<proteinExistence type="inferred from homology"/>
<keyword id="KW-0067">ATP-binding</keyword>
<keyword id="KW-0997">Cell inner membrane</keyword>
<keyword id="KW-1003">Cell membrane</keyword>
<keyword id="KW-0406">Ion transport</keyword>
<keyword id="KW-0472">Membrane</keyword>
<keyword id="KW-0547">Nucleotide-binding</keyword>
<keyword id="KW-0630">Potassium</keyword>
<keyword id="KW-0633">Potassium transport</keyword>
<keyword id="KW-1185">Reference proteome</keyword>
<keyword id="KW-0812">Transmembrane</keyword>
<keyword id="KW-1133">Transmembrane helix</keyword>
<keyword id="KW-0813">Transport</keyword>
<reference key="1">
    <citation type="journal article" date="2009" name="PLoS Genet.">
        <title>Organised genome dynamics in the Escherichia coli species results in highly diverse adaptive paths.</title>
        <authorList>
            <person name="Touchon M."/>
            <person name="Hoede C."/>
            <person name="Tenaillon O."/>
            <person name="Barbe V."/>
            <person name="Baeriswyl S."/>
            <person name="Bidet P."/>
            <person name="Bingen E."/>
            <person name="Bonacorsi S."/>
            <person name="Bouchier C."/>
            <person name="Bouvet O."/>
            <person name="Calteau A."/>
            <person name="Chiapello H."/>
            <person name="Clermont O."/>
            <person name="Cruveiller S."/>
            <person name="Danchin A."/>
            <person name="Diard M."/>
            <person name="Dossat C."/>
            <person name="Karoui M.E."/>
            <person name="Frapy E."/>
            <person name="Garry L."/>
            <person name="Ghigo J.M."/>
            <person name="Gilles A.M."/>
            <person name="Johnson J."/>
            <person name="Le Bouguenec C."/>
            <person name="Lescat M."/>
            <person name="Mangenot S."/>
            <person name="Martinez-Jehanne V."/>
            <person name="Matic I."/>
            <person name="Nassif X."/>
            <person name="Oztas S."/>
            <person name="Petit M.A."/>
            <person name="Pichon C."/>
            <person name="Rouy Z."/>
            <person name="Ruf C.S."/>
            <person name="Schneider D."/>
            <person name="Tourret J."/>
            <person name="Vacherie B."/>
            <person name="Vallenet D."/>
            <person name="Medigue C."/>
            <person name="Rocha E.P.C."/>
            <person name="Denamur E."/>
        </authorList>
    </citation>
    <scope>NUCLEOTIDE SEQUENCE [LARGE SCALE GENOMIC DNA]</scope>
    <source>
        <strain>S88 / ExPEC</strain>
    </source>
</reference>
<accession>B7MFW1</accession>
<feature type="chain" id="PRO_1000119352" description="Potassium-transporting ATPase KdpC subunit">
    <location>
        <begin position="1"/>
        <end position="190"/>
    </location>
</feature>
<feature type="transmembrane region" description="Helical" evidence="1">
    <location>
        <begin position="10"/>
        <end position="30"/>
    </location>
</feature>
<gene>
    <name evidence="1" type="primary">kdpC</name>
    <name type="ordered locus">ECS88_0730</name>
</gene>
<dbReference type="EMBL" id="CU928161">
    <property type="protein sequence ID" value="CAR02070.1"/>
    <property type="molecule type" value="Genomic_DNA"/>
</dbReference>
<dbReference type="RefSeq" id="WP_001331974.1">
    <property type="nucleotide sequence ID" value="NC_011742.1"/>
</dbReference>
<dbReference type="SMR" id="B7MFW1"/>
<dbReference type="KEGG" id="ecz:ECS88_0730"/>
<dbReference type="HOGENOM" id="CLU_077094_2_0_6"/>
<dbReference type="Proteomes" id="UP000000747">
    <property type="component" value="Chromosome"/>
</dbReference>
<dbReference type="GO" id="GO:0005886">
    <property type="term" value="C:plasma membrane"/>
    <property type="evidence" value="ECO:0007669"/>
    <property type="project" value="UniProtKB-SubCell"/>
</dbReference>
<dbReference type="GO" id="GO:0005524">
    <property type="term" value="F:ATP binding"/>
    <property type="evidence" value="ECO:0007669"/>
    <property type="project" value="UniProtKB-UniRule"/>
</dbReference>
<dbReference type="GO" id="GO:0008556">
    <property type="term" value="F:P-type potassium transmembrane transporter activity"/>
    <property type="evidence" value="ECO:0007669"/>
    <property type="project" value="InterPro"/>
</dbReference>
<dbReference type="HAMAP" id="MF_00276">
    <property type="entry name" value="KdpC"/>
    <property type="match status" value="1"/>
</dbReference>
<dbReference type="InterPro" id="IPR003820">
    <property type="entry name" value="KdpC"/>
</dbReference>
<dbReference type="NCBIfam" id="TIGR00681">
    <property type="entry name" value="kdpC"/>
    <property type="match status" value="1"/>
</dbReference>
<dbReference type="NCBIfam" id="NF001454">
    <property type="entry name" value="PRK00315.1"/>
    <property type="match status" value="1"/>
</dbReference>
<dbReference type="PANTHER" id="PTHR30042">
    <property type="entry name" value="POTASSIUM-TRANSPORTING ATPASE C CHAIN"/>
    <property type="match status" value="1"/>
</dbReference>
<dbReference type="PANTHER" id="PTHR30042:SF2">
    <property type="entry name" value="POTASSIUM-TRANSPORTING ATPASE KDPC SUBUNIT"/>
    <property type="match status" value="1"/>
</dbReference>
<dbReference type="Pfam" id="PF02669">
    <property type="entry name" value="KdpC"/>
    <property type="match status" value="1"/>
</dbReference>
<dbReference type="PIRSF" id="PIRSF001296">
    <property type="entry name" value="K_ATPase_KdpC"/>
    <property type="match status" value="1"/>
</dbReference>
<organism>
    <name type="scientific">Escherichia coli O45:K1 (strain S88 / ExPEC)</name>
    <dbReference type="NCBI Taxonomy" id="585035"/>
    <lineage>
        <taxon>Bacteria</taxon>
        <taxon>Pseudomonadati</taxon>
        <taxon>Pseudomonadota</taxon>
        <taxon>Gammaproteobacteria</taxon>
        <taxon>Enterobacterales</taxon>
        <taxon>Enterobacteriaceae</taxon>
        <taxon>Escherichia</taxon>
    </lineage>
</organism>
<comment type="function">
    <text evidence="1">Part of the high-affinity ATP-driven potassium transport (or Kdp) system, which catalyzes the hydrolysis of ATP coupled with the electrogenic transport of potassium into the cytoplasm. This subunit acts as a catalytic chaperone that increases the ATP-binding affinity of the ATP-hydrolyzing subunit KdpB by the formation of a transient KdpB/KdpC/ATP ternary complex.</text>
</comment>
<comment type="subunit">
    <text evidence="1">The system is composed of three essential subunits: KdpA, KdpB and KdpC.</text>
</comment>
<comment type="subcellular location">
    <subcellularLocation>
        <location evidence="1">Cell inner membrane</location>
        <topology evidence="1">Single-pass membrane protein</topology>
    </subcellularLocation>
</comment>
<comment type="similarity">
    <text evidence="1">Belongs to the KdpC family.</text>
</comment>
<protein>
    <recommendedName>
        <fullName evidence="1">Potassium-transporting ATPase KdpC subunit</fullName>
    </recommendedName>
    <alternativeName>
        <fullName evidence="1">ATP phosphohydrolase [potassium-transporting] C chain</fullName>
    </alternativeName>
    <alternativeName>
        <fullName evidence="1">Potassium-binding and translocating subunit C</fullName>
    </alternativeName>
    <alternativeName>
        <fullName evidence="1">Potassium-translocating ATPase C chain</fullName>
    </alternativeName>
</protein>
<name>KDPC_ECO45</name>